<keyword id="KW-0342">GTP-binding</keyword>
<keyword id="KW-0378">Hydrolase</keyword>
<keyword id="KW-0479">Metal-binding</keyword>
<keyword id="KW-0547">Nucleotide-binding</keyword>
<keyword id="KW-0686">Riboflavin biosynthesis</keyword>
<keyword id="KW-0862">Zinc</keyword>
<proteinExistence type="inferred from homology"/>
<dbReference type="EC" id="3.5.4.25" evidence="1"/>
<dbReference type="EMBL" id="CP001139">
    <property type="protein sequence ID" value="ACH67174.1"/>
    <property type="molecule type" value="Genomic_DNA"/>
</dbReference>
<dbReference type="RefSeq" id="WP_012534248.1">
    <property type="nucleotide sequence ID" value="NC_011184.1"/>
</dbReference>
<dbReference type="SMR" id="B5FDS3"/>
<dbReference type="KEGG" id="vfm:VFMJ11_1267"/>
<dbReference type="HOGENOM" id="CLU_020273_2_1_6"/>
<dbReference type="UniPathway" id="UPA00275">
    <property type="reaction ID" value="UER00400"/>
</dbReference>
<dbReference type="Proteomes" id="UP000001857">
    <property type="component" value="Chromosome I"/>
</dbReference>
<dbReference type="GO" id="GO:0005829">
    <property type="term" value="C:cytosol"/>
    <property type="evidence" value="ECO:0007669"/>
    <property type="project" value="TreeGrafter"/>
</dbReference>
<dbReference type="GO" id="GO:0005525">
    <property type="term" value="F:GTP binding"/>
    <property type="evidence" value="ECO:0007669"/>
    <property type="project" value="UniProtKB-KW"/>
</dbReference>
<dbReference type="GO" id="GO:0003935">
    <property type="term" value="F:GTP cyclohydrolase II activity"/>
    <property type="evidence" value="ECO:0007669"/>
    <property type="project" value="UniProtKB-UniRule"/>
</dbReference>
<dbReference type="GO" id="GO:0008270">
    <property type="term" value="F:zinc ion binding"/>
    <property type="evidence" value="ECO:0007669"/>
    <property type="project" value="UniProtKB-UniRule"/>
</dbReference>
<dbReference type="GO" id="GO:0009231">
    <property type="term" value="P:riboflavin biosynthetic process"/>
    <property type="evidence" value="ECO:0007669"/>
    <property type="project" value="UniProtKB-UniRule"/>
</dbReference>
<dbReference type="CDD" id="cd00641">
    <property type="entry name" value="GTP_cyclohydro2"/>
    <property type="match status" value="1"/>
</dbReference>
<dbReference type="FunFam" id="3.40.50.10990:FF:000001">
    <property type="entry name" value="Riboflavin biosynthesis protein RibBA"/>
    <property type="match status" value="1"/>
</dbReference>
<dbReference type="Gene3D" id="3.40.50.10990">
    <property type="entry name" value="GTP cyclohydrolase II"/>
    <property type="match status" value="1"/>
</dbReference>
<dbReference type="HAMAP" id="MF_00179">
    <property type="entry name" value="RibA"/>
    <property type="match status" value="1"/>
</dbReference>
<dbReference type="InterPro" id="IPR032677">
    <property type="entry name" value="GTP_cyclohydro_II"/>
</dbReference>
<dbReference type="InterPro" id="IPR000926">
    <property type="entry name" value="RibA"/>
</dbReference>
<dbReference type="InterPro" id="IPR036144">
    <property type="entry name" value="RibA-like_sf"/>
</dbReference>
<dbReference type="NCBIfam" id="NF001591">
    <property type="entry name" value="PRK00393.1"/>
    <property type="match status" value="1"/>
</dbReference>
<dbReference type="PANTHER" id="PTHR21327:SF18">
    <property type="entry name" value="3,4-DIHYDROXY-2-BUTANONE 4-PHOSPHATE SYNTHASE"/>
    <property type="match status" value="1"/>
</dbReference>
<dbReference type="PANTHER" id="PTHR21327">
    <property type="entry name" value="GTP CYCLOHYDROLASE II-RELATED"/>
    <property type="match status" value="1"/>
</dbReference>
<dbReference type="Pfam" id="PF00925">
    <property type="entry name" value="GTP_cyclohydro2"/>
    <property type="match status" value="1"/>
</dbReference>
<dbReference type="SUPFAM" id="SSF142695">
    <property type="entry name" value="RibA-like"/>
    <property type="match status" value="1"/>
</dbReference>
<accession>B5FDS3</accession>
<evidence type="ECO:0000255" key="1">
    <source>
        <dbReference type="HAMAP-Rule" id="MF_00179"/>
    </source>
</evidence>
<name>RIBA_ALIFM</name>
<sequence>MANVRARIELMVGQKSNIPAEMLSFEGLETEKEHVAVVFNQADKHQSTPLVRMHSECLTGDVFHSSRCDCGEQLEETINRMSESGGIILYLRQEGRGIGLYNKLDAYELQSQGMNTYEANNHLGFGDDLRDFKEAAQMLEALNISKIKLVTNNPKKIEDIKNYGIEIDEVVNTLAHVKQGNEHYLHSKAAHGHKLNFDK</sequence>
<protein>
    <recommendedName>
        <fullName evidence="1">GTP cyclohydrolase-2</fullName>
        <ecNumber evidence="1">3.5.4.25</ecNumber>
    </recommendedName>
    <alternativeName>
        <fullName evidence="1">GTP cyclohydrolase II</fullName>
    </alternativeName>
</protein>
<gene>
    <name evidence="1" type="primary">ribA</name>
    <name type="ordered locus">VFMJ11_1267</name>
</gene>
<organism>
    <name type="scientific">Aliivibrio fischeri (strain MJ11)</name>
    <name type="common">Vibrio fischeri</name>
    <dbReference type="NCBI Taxonomy" id="388396"/>
    <lineage>
        <taxon>Bacteria</taxon>
        <taxon>Pseudomonadati</taxon>
        <taxon>Pseudomonadota</taxon>
        <taxon>Gammaproteobacteria</taxon>
        <taxon>Vibrionales</taxon>
        <taxon>Vibrionaceae</taxon>
        <taxon>Aliivibrio</taxon>
    </lineage>
</organism>
<comment type="function">
    <text evidence="1">Catalyzes the conversion of GTP to 2,5-diamino-6-ribosylamino-4(3H)-pyrimidinone 5'-phosphate (DARP), formate and pyrophosphate.</text>
</comment>
<comment type="catalytic activity">
    <reaction evidence="1">
        <text>GTP + 4 H2O = 2,5-diamino-6-hydroxy-4-(5-phosphoribosylamino)-pyrimidine + formate + 2 phosphate + 3 H(+)</text>
        <dbReference type="Rhea" id="RHEA:23704"/>
        <dbReference type="ChEBI" id="CHEBI:15377"/>
        <dbReference type="ChEBI" id="CHEBI:15378"/>
        <dbReference type="ChEBI" id="CHEBI:15740"/>
        <dbReference type="ChEBI" id="CHEBI:37565"/>
        <dbReference type="ChEBI" id="CHEBI:43474"/>
        <dbReference type="ChEBI" id="CHEBI:58614"/>
        <dbReference type="EC" id="3.5.4.25"/>
    </reaction>
</comment>
<comment type="cofactor">
    <cofactor evidence="1">
        <name>Zn(2+)</name>
        <dbReference type="ChEBI" id="CHEBI:29105"/>
    </cofactor>
    <text evidence="1">Binds 1 zinc ion per subunit.</text>
</comment>
<comment type="pathway">
    <text evidence="1">Cofactor biosynthesis; riboflavin biosynthesis; 5-amino-6-(D-ribitylamino)uracil from GTP: step 1/4.</text>
</comment>
<comment type="similarity">
    <text evidence="1">Belongs to the GTP cyclohydrolase II family.</text>
</comment>
<reference key="1">
    <citation type="submission" date="2008-08" db="EMBL/GenBank/DDBJ databases">
        <title>Complete sequence of Vibrio fischeri strain MJ11.</title>
        <authorList>
            <person name="Mandel M.J."/>
            <person name="Stabb E.V."/>
            <person name="Ruby E.G."/>
            <person name="Ferriera S."/>
            <person name="Johnson J."/>
            <person name="Kravitz S."/>
            <person name="Beeson K."/>
            <person name="Sutton G."/>
            <person name="Rogers Y.-H."/>
            <person name="Friedman R."/>
            <person name="Frazier M."/>
            <person name="Venter J.C."/>
        </authorList>
    </citation>
    <scope>NUCLEOTIDE SEQUENCE [LARGE SCALE GENOMIC DNA]</scope>
    <source>
        <strain>MJ11</strain>
    </source>
</reference>
<feature type="chain" id="PRO_1000098274" description="GTP cyclohydrolase-2">
    <location>
        <begin position="1"/>
        <end position="199"/>
    </location>
</feature>
<feature type="active site" description="Proton acceptor" evidence="1">
    <location>
        <position position="128"/>
    </location>
</feature>
<feature type="active site" description="Nucleophile" evidence="1">
    <location>
        <position position="130"/>
    </location>
</feature>
<feature type="binding site" evidence="1">
    <location>
        <begin position="52"/>
        <end position="56"/>
    </location>
    <ligand>
        <name>GTP</name>
        <dbReference type="ChEBI" id="CHEBI:37565"/>
    </ligand>
</feature>
<feature type="binding site" evidence="1">
    <location>
        <position position="57"/>
    </location>
    <ligand>
        <name>Zn(2+)</name>
        <dbReference type="ChEBI" id="CHEBI:29105"/>
        <note>catalytic</note>
    </ligand>
</feature>
<feature type="binding site" evidence="1">
    <location>
        <position position="68"/>
    </location>
    <ligand>
        <name>Zn(2+)</name>
        <dbReference type="ChEBI" id="CHEBI:29105"/>
        <note>catalytic</note>
    </ligand>
</feature>
<feature type="binding site" evidence="1">
    <location>
        <position position="70"/>
    </location>
    <ligand>
        <name>Zn(2+)</name>
        <dbReference type="ChEBI" id="CHEBI:29105"/>
        <note>catalytic</note>
    </ligand>
</feature>
<feature type="binding site" evidence="1">
    <location>
        <position position="73"/>
    </location>
    <ligand>
        <name>GTP</name>
        <dbReference type="ChEBI" id="CHEBI:37565"/>
    </ligand>
</feature>
<feature type="binding site" evidence="1">
    <location>
        <begin position="94"/>
        <end position="96"/>
    </location>
    <ligand>
        <name>GTP</name>
        <dbReference type="ChEBI" id="CHEBI:37565"/>
    </ligand>
</feature>
<feature type="binding site" evidence="1">
    <location>
        <position position="116"/>
    </location>
    <ligand>
        <name>GTP</name>
        <dbReference type="ChEBI" id="CHEBI:37565"/>
    </ligand>
</feature>
<feature type="binding site" evidence="1">
    <location>
        <position position="151"/>
    </location>
    <ligand>
        <name>GTP</name>
        <dbReference type="ChEBI" id="CHEBI:37565"/>
    </ligand>
</feature>
<feature type="binding site" evidence="1">
    <location>
        <position position="156"/>
    </location>
    <ligand>
        <name>GTP</name>
        <dbReference type="ChEBI" id="CHEBI:37565"/>
    </ligand>
</feature>